<dbReference type="EC" id="1.2.1.70" evidence="1"/>
<dbReference type="EMBL" id="CP000964">
    <property type="protein sequence ID" value="ACI11725.1"/>
    <property type="molecule type" value="Genomic_DNA"/>
</dbReference>
<dbReference type="SMR" id="B5XW50"/>
<dbReference type="KEGG" id="kpe:KPK_2068"/>
<dbReference type="HOGENOM" id="CLU_035113_2_2_6"/>
<dbReference type="UniPathway" id="UPA00251">
    <property type="reaction ID" value="UER00316"/>
</dbReference>
<dbReference type="Proteomes" id="UP000001734">
    <property type="component" value="Chromosome"/>
</dbReference>
<dbReference type="GO" id="GO:0008883">
    <property type="term" value="F:glutamyl-tRNA reductase activity"/>
    <property type="evidence" value="ECO:0007669"/>
    <property type="project" value="UniProtKB-UniRule"/>
</dbReference>
<dbReference type="GO" id="GO:0050661">
    <property type="term" value="F:NADP binding"/>
    <property type="evidence" value="ECO:0007669"/>
    <property type="project" value="InterPro"/>
</dbReference>
<dbReference type="GO" id="GO:0019353">
    <property type="term" value="P:protoporphyrinogen IX biosynthetic process from glutamate"/>
    <property type="evidence" value="ECO:0007669"/>
    <property type="project" value="TreeGrafter"/>
</dbReference>
<dbReference type="CDD" id="cd05213">
    <property type="entry name" value="NAD_bind_Glutamyl_tRNA_reduct"/>
    <property type="match status" value="1"/>
</dbReference>
<dbReference type="FunFam" id="3.30.460.30:FF:000001">
    <property type="entry name" value="Glutamyl-tRNA reductase"/>
    <property type="match status" value="1"/>
</dbReference>
<dbReference type="FunFam" id="3.40.50.720:FF:000031">
    <property type="entry name" value="Glutamyl-tRNA reductase"/>
    <property type="match status" value="1"/>
</dbReference>
<dbReference type="Gene3D" id="3.30.460.30">
    <property type="entry name" value="Glutamyl-tRNA reductase, N-terminal domain"/>
    <property type="match status" value="1"/>
</dbReference>
<dbReference type="Gene3D" id="3.40.50.720">
    <property type="entry name" value="NAD(P)-binding Rossmann-like Domain"/>
    <property type="match status" value="1"/>
</dbReference>
<dbReference type="HAMAP" id="MF_00087">
    <property type="entry name" value="Glu_tRNA_reductase"/>
    <property type="match status" value="1"/>
</dbReference>
<dbReference type="InterPro" id="IPR000343">
    <property type="entry name" value="4pyrrol_synth_GluRdtase"/>
</dbReference>
<dbReference type="InterPro" id="IPR015896">
    <property type="entry name" value="4pyrrol_synth_GluRdtase_dimer"/>
</dbReference>
<dbReference type="InterPro" id="IPR015895">
    <property type="entry name" value="4pyrrol_synth_GluRdtase_N"/>
</dbReference>
<dbReference type="InterPro" id="IPR018214">
    <property type="entry name" value="GluRdtase_CS"/>
</dbReference>
<dbReference type="InterPro" id="IPR036453">
    <property type="entry name" value="GluRdtase_dimer_dom_sf"/>
</dbReference>
<dbReference type="InterPro" id="IPR036343">
    <property type="entry name" value="GluRdtase_N_sf"/>
</dbReference>
<dbReference type="InterPro" id="IPR036291">
    <property type="entry name" value="NAD(P)-bd_dom_sf"/>
</dbReference>
<dbReference type="InterPro" id="IPR006151">
    <property type="entry name" value="Shikm_DH/Glu-tRNA_Rdtase"/>
</dbReference>
<dbReference type="NCBIfam" id="TIGR01035">
    <property type="entry name" value="hemA"/>
    <property type="match status" value="1"/>
</dbReference>
<dbReference type="PANTHER" id="PTHR43013">
    <property type="entry name" value="GLUTAMYL-TRNA REDUCTASE"/>
    <property type="match status" value="1"/>
</dbReference>
<dbReference type="PANTHER" id="PTHR43013:SF1">
    <property type="entry name" value="GLUTAMYL-TRNA REDUCTASE"/>
    <property type="match status" value="1"/>
</dbReference>
<dbReference type="Pfam" id="PF00745">
    <property type="entry name" value="GlutR_dimer"/>
    <property type="match status" value="1"/>
</dbReference>
<dbReference type="Pfam" id="PF05201">
    <property type="entry name" value="GlutR_N"/>
    <property type="match status" value="1"/>
</dbReference>
<dbReference type="Pfam" id="PF01488">
    <property type="entry name" value="Shikimate_DH"/>
    <property type="match status" value="1"/>
</dbReference>
<dbReference type="PIRSF" id="PIRSF000445">
    <property type="entry name" value="4pyrrol_synth_GluRdtase"/>
    <property type="match status" value="1"/>
</dbReference>
<dbReference type="SUPFAM" id="SSF69742">
    <property type="entry name" value="Glutamyl tRNA-reductase catalytic, N-terminal domain"/>
    <property type="match status" value="1"/>
</dbReference>
<dbReference type="SUPFAM" id="SSF69075">
    <property type="entry name" value="Glutamyl tRNA-reductase dimerization domain"/>
    <property type="match status" value="1"/>
</dbReference>
<dbReference type="SUPFAM" id="SSF51735">
    <property type="entry name" value="NAD(P)-binding Rossmann-fold domains"/>
    <property type="match status" value="1"/>
</dbReference>
<dbReference type="PROSITE" id="PS00747">
    <property type="entry name" value="GLUTR"/>
    <property type="match status" value="1"/>
</dbReference>
<accession>B5XW50</accession>
<evidence type="ECO:0000255" key="1">
    <source>
        <dbReference type="HAMAP-Rule" id="MF_00087"/>
    </source>
</evidence>
<name>HEM1_KLEP3</name>
<feature type="chain" id="PRO_1000093147" description="Glutamyl-tRNA reductase">
    <location>
        <begin position="1"/>
        <end position="418"/>
    </location>
</feature>
<feature type="active site" description="Nucleophile" evidence="1">
    <location>
        <position position="50"/>
    </location>
</feature>
<feature type="binding site" evidence="1">
    <location>
        <begin position="49"/>
        <end position="52"/>
    </location>
    <ligand>
        <name>substrate</name>
    </ligand>
</feature>
<feature type="binding site" evidence="1">
    <location>
        <position position="109"/>
    </location>
    <ligand>
        <name>substrate</name>
    </ligand>
</feature>
<feature type="binding site" evidence="1">
    <location>
        <begin position="114"/>
        <end position="116"/>
    </location>
    <ligand>
        <name>substrate</name>
    </ligand>
</feature>
<feature type="binding site" evidence="1">
    <location>
        <position position="120"/>
    </location>
    <ligand>
        <name>substrate</name>
    </ligand>
</feature>
<feature type="binding site" evidence="1">
    <location>
        <begin position="189"/>
        <end position="194"/>
    </location>
    <ligand>
        <name>NADP(+)</name>
        <dbReference type="ChEBI" id="CHEBI:58349"/>
    </ligand>
</feature>
<feature type="site" description="Important for activity" evidence="1">
    <location>
        <position position="99"/>
    </location>
</feature>
<comment type="function">
    <text evidence="1">Catalyzes the NADPH-dependent reduction of glutamyl-tRNA(Glu) to glutamate 1-semialdehyde (GSA).</text>
</comment>
<comment type="catalytic activity">
    <reaction evidence="1">
        <text>(S)-4-amino-5-oxopentanoate + tRNA(Glu) + NADP(+) = L-glutamyl-tRNA(Glu) + NADPH + H(+)</text>
        <dbReference type="Rhea" id="RHEA:12344"/>
        <dbReference type="Rhea" id="RHEA-COMP:9663"/>
        <dbReference type="Rhea" id="RHEA-COMP:9680"/>
        <dbReference type="ChEBI" id="CHEBI:15378"/>
        <dbReference type="ChEBI" id="CHEBI:57501"/>
        <dbReference type="ChEBI" id="CHEBI:57783"/>
        <dbReference type="ChEBI" id="CHEBI:58349"/>
        <dbReference type="ChEBI" id="CHEBI:78442"/>
        <dbReference type="ChEBI" id="CHEBI:78520"/>
        <dbReference type="EC" id="1.2.1.70"/>
    </reaction>
</comment>
<comment type="pathway">
    <text evidence="1">Porphyrin-containing compound metabolism; protoporphyrin-IX biosynthesis; 5-aminolevulinate from L-glutamyl-tRNA(Glu): step 1/2.</text>
</comment>
<comment type="subunit">
    <text evidence="1">Homodimer.</text>
</comment>
<comment type="domain">
    <text evidence="1">Possesses an unusual extended V-shaped dimeric structure with each monomer consisting of three distinct domains arranged along a curved 'spinal' alpha-helix. The N-terminal catalytic domain specifically recognizes the glutamate moiety of the substrate. The second domain is the NADPH-binding domain, and the third C-terminal domain is responsible for dimerization.</text>
</comment>
<comment type="miscellaneous">
    <text evidence="1">During catalysis, the active site Cys acts as a nucleophile attacking the alpha-carbonyl group of tRNA-bound glutamate with the formation of a thioester intermediate between enzyme and glutamate, and the concomitant release of tRNA(Glu). The thioester intermediate is finally reduced by direct hydride transfer from NADPH, to form the product GSA.</text>
</comment>
<comment type="similarity">
    <text evidence="1">Belongs to the glutamyl-tRNA reductase family.</text>
</comment>
<protein>
    <recommendedName>
        <fullName evidence="1">Glutamyl-tRNA reductase</fullName>
        <shortName evidence="1">GluTR</shortName>
        <ecNumber evidence="1">1.2.1.70</ecNumber>
    </recommendedName>
</protein>
<keyword id="KW-0521">NADP</keyword>
<keyword id="KW-0560">Oxidoreductase</keyword>
<keyword id="KW-0627">Porphyrin biosynthesis</keyword>
<proteinExistence type="inferred from homology"/>
<reference key="1">
    <citation type="journal article" date="2008" name="PLoS Genet.">
        <title>Complete genome sequence of the N2-fixing broad host range endophyte Klebsiella pneumoniae 342 and virulence predictions verified in mice.</title>
        <authorList>
            <person name="Fouts D.E."/>
            <person name="Tyler H.L."/>
            <person name="DeBoy R.T."/>
            <person name="Daugherty S."/>
            <person name="Ren Q."/>
            <person name="Badger J.H."/>
            <person name="Durkin A.S."/>
            <person name="Huot H."/>
            <person name="Shrivastava S."/>
            <person name="Kothari S."/>
            <person name="Dodson R.J."/>
            <person name="Mohamoud Y."/>
            <person name="Khouri H."/>
            <person name="Roesch L.F.W."/>
            <person name="Krogfelt K.A."/>
            <person name="Struve C."/>
            <person name="Triplett E.W."/>
            <person name="Methe B.A."/>
        </authorList>
    </citation>
    <scope>NUCLEOTIDE SEQUENCE [LARGE SCALE GENOMIC DNA]</scope>
    <source>
        <strain>342</strain>
    </source>
</reference>
<gene>
    <name evidence="1" type="primary">hemA</name>
    <name type="ordered locus">KPK_2068</name>
</gene>
<sequence length="418" mass="46390">MTLLALGINHKTAPVDLRERVTFSPETLDQALESLLAQPMVQGGVVLSTCNRTELYLSVEEQDNLQEALIRWLCNYHGLNEEDLRKSLYWHQDNDAVSHLMRVASGLDSLVLGEPQILGQVKKAFADSSRGHLNVSELERMFQKSFSVAKRVRTETDIGASAVSVAFAACTLARQIFESLSSVTVLLVGAGETIELVARHLREHHVRKMVIANRTRERAQALADEVGAEVIALSDIDERLKEADIIISSTASPLPIIGKGMVERALKARRNQPMLLVDIAVPRDVEPEVGKLANAYLYSVDDLQNIIQHNLAQRKAAAVQAESIVEQETSEFMAWLRAQSASETIREYRSQSEQVREELTAKALAALEQGGDAQEIMQDLARKLTNRLIHAPTKSLQQAARDGDDERLHILRNSLGLE</sequence>
<organism>
    <name type="scientific">Klebsiella pneumoniae (strain 342)</name>
    <dbReference type="NCBI Taxonomy" id="507522"/>
    <lineage>
        <taxon>Bacteria</taxon>
        <taxon>Pseudomonadati</taxon>
        <taxon>Pseudomonadota</taxon>
        <taxon>Gammaproteobacteria</taxon>
        <taxon>Enterobacterales</taxon>
        <taxon>Enterobacteriaceae</taxon>
        <taxon>Klebsiella/Raoultella group</taxon>
        <taxon>Klebsiella</taxon>
        <taxon>Klebsiella pneumoniae complex</taxon>
    </lineage>
</organism>